<dbReference type="EC" id="1.3.1.-"/>
<dbReference type="EMBL" id="X71436">
    <property type="protein sequence ID" value="CAA50567.1"/>
    <property type="molecule type" value="Genomic_DNA"/>
</dbReference>
<dbReference type="PIR" id="S36201">
    <property type="entry name" value="S36201"/>
</dbReference>
<dbReference type="SMR" id="P41504"/>
<dbReference type="GO" id="GO:0050660">
    <property type="term" value="F:flavin adenine dinucleotide binding"/>
    <property type="evidence" value="ECO:0007669"/>
    <property type="project" value="InterPro"/>
</dbReference>
<dbReference type="GO" id="GO:0000049">
    <property type="term" value="F:tRNA binding"/>
    <property type="evidence" value="ECO:0007669"/>
    <property type="project" value="UniProtKB-KW"/>
</dbReference>
<dbReference type="GO" id="GO:0017150">
    <property type="term" value="F:tRNA dihydrouridine synthase activity"/>
    <property type="evidence" value="ECO:0007669"/>
    <property type="project" value="InterPro"/>
</dbReference>
<dbReference type="CDD" id="cd02801">
    <property type="entry name" value="DUS_like_FMN"/>
    <property type="match status" value="1"/>
</dbReference>
<dbReference type="Gene3D" id="3.20.20.70">
    <property type="entry name" value="Aldolase class I"/>
    <property type="match status" value="1"/>
</dbReference>
<dbReference type="Gene3D" id="1.10.1200.80">
    <property type="entry name" value="Putative flavin oxidoreducatase, domain 2"/>
    <property type="match status" value="1"/>
</dbReference>
<dbReference type="InterPro" id="IPR013785">
    <property type="entry name" value="Aldolase_TIM"/>
</dbReference>
<dbReference type="InterPro" id="IPR035587">
    <property type="entry name" value="DUS-like_FMN-bd"/>
</dbReference>
<dbReference type="InterPro" id="IPR001269">
    <property type="entry name" value="DUS_fam"/>
</dbReference>
<dbReference type="InterPro" id="IPR004652">
    <property type="entry name" value="DusB-like"/>
</dbReference>
<dbReference type="InterPro" id="IPR024036">
    <property type="entry name" value="tRNA-dHydroUridine_Synthase_C"/>
</dbReference>
<dbReference type="InterPro" id="IPR018517">
    <property type="entry name" value="tRNA_hU_synthase_CS"/>
</dbReference>
<dbReference type="NCBIfam" id="TIGR00737">
    <property type="entry name" value="nifR3_yhdG"/>
    <property type="match status" value="1"/>
</dbReference>
<dbReference type="PANTHER" id="PTHR45846">
    <property type="entry name" value="TRNA-DIHYDROURIDINE(47) SYNTHASE [NAD(P)(+)]-LIKE"/>
    <property type="match status" value="1"/>
</dbReference>
<dbReference type="PANTHER" id="PTHR45846:SF1">
    <property type="entry name" value="TRNA-DIHYDROURIDINE(47) SYNTHASE [NAD(P)(+)]-LIKE"/>
    <property type="match status" value="1"/>
</dbReference>
<dbReference type="Pfam" id="PF01207">
    <property type="entry name" value="Dus"/>
    <property type="match status" value="1"/>
</dbReference>
<dbReference type="PIRSF" id="PIRSF006621">
    <property type="entry name" value="Dus"/>
    <property type="match status" value="1"/>
</dbReference>
<dbReference type="SUPFAM" id="SSF51395">
    <property type="entry name" value="FMN-linked oxidoreductases"/>
    <property type="match status" value="1"/>
</dbReference>
<dbReference type="PROSITE" id="PS01136">
    <property type="entry name" value="UPF0034"/>
    <property type="match status" value="1"/>
</dbReference>
<organism>
    <name type="scientific">Rhizobium leguminosarum bv. phaseoli</name>
    <dbReference type="NCBI Taxonomy" id="385"/>
    <lineage>
        <taxon>Bacteria</taxon>
        <taxon>Pseudomonadati</taxon>
        <taxon>Pseudomonadota</taxon>
        <taxon>Alphaproteobacteria</taxon>
        <taxon>Hyphomicrobiales</taxon>
        <taxon>Rhizobiaceae</taxon>
        <taxon>Rhizobium/Agrobacterium group</taxon>
        <taxon>Rhizobium</taxon>
    </lineage>
</organism>
<proteinExistence type="inferred from homology"/>
<comment type="function">
    <text evidence="1">Catalyzes the synthesis of 5,6-dihydrouridine (D), a modified base found in the D-loop of most tRNAs, via the reduction of the C5-C6 double bond in target uridines.</text>
</comment>
<comment type="catalytic activity">
    <reaction evidence="1">
        <text>a 5,6-dihydrouridine in tRNA + NAD(+) = a uridine in tRNA + NADH + H(+)</text>
        <dbReference type="Rhea" id="RHEA:54452"/>
        <dbReference type="Rhea" id="RHEA-COMP:13339"/>
        <dbReference type="Rhea" id="RHEA-COMP:13887"/>
        <dbReference type="ChEBI" id="CHEBI:15378"/>
        <dbReference type="ChEBI" id="CHEBI:57540"/>
        <dbReference type="ChEBI" id="CHEBI:57945"/>
        <dbReference type="ChEBI" id="CHEBI:65315"/>
        <dbReference type="ChEBI" id="CHEBI:74443"/>
    </reaction>
</comment>
<comment type="catalytic activity">
    <reaction evidence="1">
        <text>a 5,6-dihydrouridine in tRNA + NADP(+) = a uridine in tRNA + NADPH + H(+)</text>
        <dbReference type="Rhea" id="RHEA:23624"/>
        <dbReference type="Rhea" id="RHEA-COMP:13339"/>
        <dbReference type="Rhea" id="RHEA-COMP:13887"/>
        <dbReference type="ChEBI" id="CHEBI:15378"/>
        <dbReference type="ChEBI" id="CHEBI:57783"/>
        <dbReference type="ChEBI" id="CHEBI:58349"/>
        <dbReference type="ChEBI" id="CHEBI:65315"/>
        <dbReference type="ChEBI" id="CHEBI:74443"/>
    </reaction>
</comment>
<comment type="cofactor">
    <cofactor evidence="1">
        <name>FMN</name>
        <dbReference type="ChEBI" id="CHEBI:58210"/>
    </cofactor>
</comment>
<comment type="similarity">
    <text evidence="3">Belongs to the Dus family.</text>
</comment>
<accession>P41504</accession>
<sequence>MSVRNRVVLAPMSGVTDMPFRELAWRFGAGLVVTEMVASRELVNDTAESWSRLKAAGFRPHMVQLAGREAHWMAEAAKIAADHGADIIDINMGCPAKKVIGGYSGSALMRDPDHALGLIEATVKAVDIPVTLKMRLGWDENSINAPDIARRAEASGIQLVTIHGRTRMQFYEGRADWDAIRAVREVISVPLIANGDVETAHDAQEILRRSGADAVMIGRGCQGRPWHAGVLAGAAEPRREDIADIAVEHYRMMLDFYGEAVAIRHARKHLGWYLERFAPALAGTEKAGIMTSRDPREVAARLYHALDAGALDGREAA</sequence>
<name>DUS_RHILP</name>
<protein>
    <recommendedName>
        <fullName>Probable tRNA-dihydrouridine synthase</fullName>
        <ecNumber>1.3.1.-</ecNumber>
    </recommendedName>
</protein>
<reference key="1">
    <citation type="journal article" date="1993" name="Mol. Microbiol.">
        <title>The ntrBC genes of Rhizobium leguminosarum are part of a complex operon subject to negative regulation.</title>
        <authorList>
            <person name="Patriarca E.J."/>
            <person name="Riccio A."/>
            <person name="Tate R."/>
            <person name="Colonna-Romano S."/>
            <person name="Iaccarino M."/>
            <person name="Defez R."/>
        </authorList>
    </citation>
    <scope>NUCLEOTIDE SEQUENCE [GENOMIC DNA]</scope>
    <source>
        <strain>CE-3</strain>
    </source>
</reference>
<feature type="chain" id="PRO_0000162138" description="Probable tRNA-dihydrouridine synthase">
    <location>
        <begin position="1"/>
        <end position="317"/>
    </location>
</feature>
<feature type="active site" description="Proton donor" evidence="2">
    <location>
        <position position="94"/>
    </location>
</feature>
<feature type="binding site" evidence="1">
    <location>
        <begin position="11"/>
        <end position="13"/>
    </location>
    <ligand>
        <name>FMN</name>
        <dbReference type="ChEBI" id="CHEBI:58210"/>
    </ligand>
</feature>
<feature type="binding site" evidence="1">
    <location>
        <position position="64"/>
    </location>
    <ligand>
        <name>FMN</name>
        <dbReference type="ChEBI" id="CHEBI:58210"/>
    </ligand>
</feature>
<feature type="binding site" evidence="1">
    <location>
        <position position="133"/>
    </location>
    <ligand>
        <name>FMN</name>
        <dbReference type="ChEBI" id="CHEBI:58210"/>
    </ligand>
</feature>
<feature type="binding site" evidence="1">
    <location>
        <begin position="194"/>
        <end position="196"/>
    </location>
    <ligand>
        <name>FMN</name>
        <dbReference type="ChEBI" id="CHEBI:58210"/>
    </ligand>
</feature>
<feature type="binding site" evidence="1">
    <location>
        <begin position="218"/>
        <end position="219"/>
    </location>
    <ligand>
        <name>FMN</name>
        <dbReference type="ChEBI" id="CHEBI:58210"/>
    </ligand>
</feature>
<evidence type="ECO:0000250" key="1">
    <source>
        <dbReference type="UniProtKB" id="P33371"/>
    </source>
</evidence>
<evidence type="ECO:0000250" key="2">
    <source>
        <dbReference type="UniProtKB" id="Q5SMC7"/>
    </source>
</evidence>
<evidence type="ECO:0000305" key="3"/>
<keyword id="KW-0285">Flavoprotein</keyword>
<keyword id="KW-0288">FMN</keyword>
<keyword id="KW-0521">NADP</keyword>
<keyword id="KW-0560">Oxidoreductase</keyword>
<keyword id="KW-0694">RNA-binding</keyword>
<keyword id="KW-0819">tRNA processing</keyword>
<keyword id="KW-0820">tRNA-binding</keyword>
<gene>
    <name type="primary">dus</name>
</gene>